<protein>
    <recommendedName>
        <fullName>Uncharacterized protein KIAA0232</fullName>
    </recommendedName>
</protein>
<name>K0232_HUMAN</name>
<gene>
    <name type="primary">KIAA0232</name>
</gene>
<proteinExistence type="evidence at protein level"/>
<feature type="chain" id="PRO_0000050738" description="Uncharacterized protein KIAA0232">
    <location>
        <begin position="1"/>
        <end position="1395"/>
    </location>
</feature>
<feature type="region of interest" description="Disordered" evidence="3">
    <location>
        <begin position="146"/>
        <end position="166"/>
    </location>
</feature>
<feature type="region of interest" description="Disordered" evidence="3">
    <location>
        <begin position="205"/>
        <end position="391"/>
    </location>
</feature>
<feature type="region of interest" description="Disordered" evidence="3">
    <location>
        <begin position="1110"/>
        <end position="1132"/>
    </location>
</feature>
<feature type="region of interest" description="Disordered" evidence="3">
    <location>
        <begin position="1346"/>
        <end position="1395"/>
    </location>
</feature>
<feature type="compositionally biased region" description="Low complexity" evidence="3">
    <location>
        <begin position="155"/>
        <end position="166"/>
    </location>
</feature>
<feature type="compositionally biased region" description="Low complexity" evidence="3">
    <location>
        <begin position="205"/>
        <end position="222"/>
    </location>
</feature>
<feature type="compositionally biased region" description="Basic and acidic residues" evidence="3">
    <location>
        <begin position="230"/>
        <end position="269"/>
    </location>
</feature>
<feature type="compositionally biased region" description="Low complexity" evidence="3">
    <location>
        <begin position="287"/>
        <end position="301"/>
    </location>
</feature>
<feature type="compositionally biased region" description="Basic residues" evidence="3">
    <location>
        <begin position="313"/>
        <end position="328"/>
    </location>
</feature>
<feature type="compositionally biased region" description="Basic and acidic residues" evidence="3">
    <location>
        <begin position="337"/>
        <end position="346"/>
    </location>
</feature>
<feature type="compositionally biased region" description="Low complexity" evidence="3">
    <location>
        <begin position="349"/>
        <end position="358"/>
    </location>
</feature>
<feature type="compositionally biased region" description="Basic and acidic residues" evidence="3">
    <location>
        <begin position="369"/>
        <end position="391"/>
    </location>
</feature>
<feature type="compositionally biased region" description="Basic and acidic residues" evidence="3">
    <location>
        <begin position="1346"/>
        <end position="1359"/>
    </location>
</feature>
<feature type="binding site" evidence="2">
    <location>
        <begin position="89"/>
        <end position="96"/>
    </location>
    <ligand>
        <name>ATP</name>
        <dbReference type="ChEBI" id="CHEBI:30616"/>
    </ligand>
</feature>
<feature type="modified residue" description="Phosphoserine" evidence="5">
    <location>
        <position position="814"/>
    </location>
</feature>
<feature type="modified residue" description="Phosphoserine" evidence="5">
    <location>
        <position position="1080"/>
    </location>
</feature>
<feature type="modified residue" description="Phosphoserine" evidence="1">
    <location>
        <position position="1194"/>
    </location>
</feature>
<feature type="modified residue" description="Phosphoserine" evidence="5">
    <location>
        <position position="1338"/>
    </location>
</feature>
<feature type="sequence conflict" description="In Ref. 1; BAA13221 and 4; AAI50287." evidence="4" ref="1 4">
    <original>N</original>
    <variation>K</variation>
    <location>
        <position position="535"/>
    </location>
</feature>
<evidence type="ECO:0000250" key="1">
    <source>
        <dbReference type="UniProtKB" id="Q80U59"/>
    </source>
</evidence>
<evidence type="ECO:0000255" key="2"/>
<evidence type="ECO:0000256" key="3">
    <source>
        <dbReference type="SAM" id="MobiDB-lite"/>
    </source>
</evidence>
<evidence type="ECO:0000305" key="4"/>
<evidence type="ECO:0007744" key="5">
    <source>
    </source>
</evidence>
<accession>Q92628</accession>
<accession>A7E2D2</accession>
<sequence>MYPICTVVVDGLPSESSSSSYPGPVSVSEMSLLHALGPVQTWLGQELEKCGIDAMIYTRYVLSLLLHDSYDYDLQEQENDIFLGWEKGAYKKWGKSKKKCSDLTLEEMKKQAAVQCLRSASDESSGIETLVEELCSRLKDLQSKQEEKIHKKLEGSPSPEAELSPPAKDQVEMYYEAFPPLSEKPVCLQEIMTVWNKSKVCSYSSSSSSSTAPPASTDTSSPKDCNSESEVTKERSSEVPTTVHEKTQSKSKNEKENKFSNGTIEEKPALYKKQIRHKPEGKIRPRSWSSGSSEAGSSSSGNQGELKASMKYVKVRHKAREIRNKKGRNGQSRLSLKHGEKAERNIHTGSSSSSSSGSVKQLCKRGKRPLKEIGRKDPGSTEGKDLYMENRKDTEYKEEPLWYTEPIAEYFVPLSRKSKLETTYRNRQDTSDLTSEAVEELSESVHGLCISNNNLHKTYLAAGTFIDGHFVEMPAVINEDIDLTGTSLCSLPEDNKYLDDIHLSELTHFYEVDIDQSMLDPGASETMQGESRILNMIRQKSKENTDFEAECCIVLDGMELQGERAIWTDSTSSVGAEGLFLQDLGNLAQFWECCSSSSGDADGESFGGDSPVRLSPILDSTVLNSHLLAGNQELFSDINEGSGINSCFSVFEVQCSNSVLPFSFETLNLGNENTDSSANMLGKTQSRLLIWTKNSAFEENEHCSNLSTRTCSPWSHSEETRSDNETLNIQFEESTQFNAEDINYVVPRVSSNYVDEELLDFLQDETCQQNSRTLGEIPTLVFKKTSKLESVCGIQLEQKTENKNFETTQVCNESPHGDGYSSGVIKDIWTKMADTNSVATVEIERTDAELFSADVNNYCCCLDAEAELETLQEPDKAVRRSEYHLWEGQKESLEKRAFASSELSNVDGGDYTTPSKPWDVAQDKENTFILGGVYGELKTFNSDGEWAVVPPSHTKGSLLQCAASDVVTIAGTDVFMTPGNSFAPGHRQLWKPFVSFEQNDQPKSGENGLNKGFSFIFHEDLLGACGNFQVEDPGLEYSFSSFDLSNPFSQVLHVECSFEPEGIASFSPSFKPKSILCSDSDSEVFHPRICGVDRTQYRAIRISPRTHFRPISASELSPGGGSESEFESEKDEANIPIPSQVDIFEDPQADLKPLEEDAEKEGHYYGKSELESGKFLPRLKKSGMEKSAQTSLDSQEESTGILSVGKQNQCLECSMNESLEIDLESSEANCKIMAQCEEEINNFCGCKAGCQFPAYEDNPVSSGQLEEFPVLNTDIQGMNRSQEKQTWWEKALYSPLFPASECEECYTNAKGESGLEEYPDAKETPSNEERLLDFNRVSSVYEARCTGERDSGAKSDGFRGKMCSSASSTSEETGSEGGGEWVGPSEEELFSRTHL</sequence>
<comment type="interaction">
    <interactant intactId="EBI-720700">
        <id>Q92628</id>
    </interactant>
    <interactant intactId="EBI-14384265">
        <id>Q8N9F0</id>
        <label>NAT8L</label>
    </interactant>
    <organismsDiffer>false</organismsDiffer>
    <experiments>2</experiments>
</comment>
<comment type="sequence caution" evidence="4">
    <conflict type="erroneous initiation">
        <sequence resource="EMBL-CDS" id="BAA13221"/>
    </conflict>
    <text>Extended N-terminus.</text>
</comment>
<reference key="1">
    <citation type="journal article" date="1996" name="DNA Res.">
        <title>Prediction of the coding sequences of unidentified human genes. VI. The coding sequences of 80 new genes (KIAA0201-KIAA0280) deduced by analysis of cDNA clones from cell line KG-1 and brain.</title>
        <authorList>
            <person name="Nagase T."/>
            <person name="Seki N."/>
            <person name="Ishikawa K."/>
            <person name="Ohira M."/>
            <person name="Kawarabayasi Y."/>
            <person name="Ohara O."/>
            <person name="Tanaka A."/>
            <person name="Kotani H."/>
            <person name="Miyajima N."/>
            <person name="Nomura N."/>
        </authorList>
    </citation>
    <scope>NUCLEOTIDE SEQUENCE [LARGE SCALE MRNA]</scope>
    <source>
        <tissue>Bone marrow</tissue>
    </source>
</reference>
<reference key="2">
    <citation type="journal article" date="2002" name="DNA Res.">
        <title>Construction of expression-ready cDNA clones for KIAA genes: manual curation of 330 KIAA cDNA clones.</title>
        <authorList>
            <person name="Nakajima D."/>
            <person name="Okazaki N."/>
            <person name="Yamakawa H."/>
            <person name="Kikuno R."/>
            <person name="Ohara O."/>
            <person name="Nagase T."/>
        </authorList>
    </citation>
    <scope>SEQUENCE REVISION TO 535</scope>
</reference>
<reference key="3">
    <citation type="journal article" date="2005" name="Nature">
        <title>Generation and annotation of the DNA sequences of human chromosomes 2 and 4.</title>
        <authorList>
            <person name="Hillier L.W."/>
            <person name="Graves T.A."/>
            <person name="Fulton R.S."/>
            <person name="Fulton L.A."/>
            <person name="Pepin K.H."/>
            <person name="Minx P."/>
            <person name="Wagner-McPherson C."/>
            <person name="Layman D."/>
            <person name="Wylie K."/>
            <person name="Sekhon M."/>
            <person name="Becker M.C."/>
            <person name="Fewell G.A."/>
            <person name="Delehaunty K.D."/>
            <person name="Miner T.L."/>
            <person name="Nash W.E."/>
            <person name="Kremitzki C."/>
            <person name="Oddy L."/>
            <person name="Du H."/>
            <person name="Sun H."/>
            <person name="Bradshaw-Cordum H."/>
            <person name="Ali J."/>
            <person name="Carter J."/>
            <person name="Cordes M."/>
            <person name="Harris A."/>
            <person name="Isak A."/>
            <person name="van Brunt A."/>
            <person name="Nguyen C."/>
            <person name="Du F."/>
            <person name="Courtney L."/>
            <person name="Kalicki J."/>
            <person name="Ozersky P."/>
            <person name="Abbott S."/>
            <person name="Armstrong J."/>
            <person name="Belter E.A."/>
            <person name="Caruso L."/>
            <person name="Cedroni M."/>
            <person name="Cotton M."/>
            <person name="Davidson T."/>
            <person name="Desai A."/>
            <person name="Elliott G."/>
            <person name="Erb T."/>
            <person name="Fronick C."/>
            <person name="Gaige T."/>
            <person name="Haakenson W."/>
            <person name="Haglund K."/>
            <person name="Holmes A."/>
            <person name="Harkins R."/>
            <person name="Kim K."/>
            <person name="Kruchowski S.S."/>
            <person name="Strong C.M."/>
            <person name="Grewal N."/>
            <person name="Goyea E."/>
            <person name="Hou S."/>
            <person name="Levy A."/>
            <person name="Martinka S."/>
            <person name="Mead K."/>
            <person name="McLellan M.D."/>
            <person name="Meyer R."/>
            <person name="Randall-Maher J."/>
            <person name="Tomlinson C."/>
            <person name="Dauphin-Kohlberg S."/>
            <person name="Kozlowicz-Reilly A."/>
            <person name="Shah N."/>
            <person name="Swearengen-Shahid S."/>
            <person name="Snider J."/>
            <person name="Strong J.T."/>
            <person name="Thompson J."/>
            <person name="Yoakum M."/>
            <person name="Leonard S."/>
            <person name="Pearman C."/>
            <person name="Trani L."/>
            <person name="Radionenko M."/>
            <person name="Waligorski J.E."/>
            <person name="Wang C."/>
            <person name="Rock S.M."/>
            <person name="Tin-Wollam A.-M."/>
            <person name="Maupin R."/>
            <person name="Latreille P."/>
            <person name="Wendl M.C."/>
            <person name="Yang S.-P."/>
            <person name="Pohl C."/>
            <person name="Wallis J.W."/>
            <person name="Spieth J."/>
            <person name="Bieri T.A."/>
            <person name="Berkowicz N."/>
            <person name="Nelson J.O."/>
            <person name="Osborne J."/>
            <person name="Ding L."/>
            <person name="Meyer R."/>
            <person name="Sabo A."/>
            <person name="Shotland Y."/>
            <person name="Sinha P."/>
            <person name="Wohldmann P.E."/>
            <person name="Cook L.L."/>
            <person name="Hickenbotham M.T."/>
            <person name="Eldred J."/>
            <person name="Williams D."/>
            <person name="Jones T.A."/>
            <person name="She X."/>
            <person name="Ciccarelli F.D."/>
            <person name="Izaurralde E."/>
            <person name="Taylor J."/>
            <person name="Schmutz J."/>
            <person name="Myers R.M."/>
            <person name="Cox D.R."/>
            <person name="Huang X."/>
            <person name="McPherson J.D."/>
            <person name="Mardis E.R."/>
            <person name="Clifton S.W."/>
            <person name="Warren W.C."/>
            <person name="Chinwalla A.T."/>
            <person name="Eddy S.R."/>
            <person name="Marra M.A."/>
            <person name="Ovcharenko I."/>
            <person name="Furey T.S."/>
            <person name="Miller W."/>
            <person name="Eichler E.E."/>
            <person name="Bork P."/>
            <person name="Suyama M."/>
            <person name="Torrents D."/>
            <person name="Waterston R.H."/>
            <person name="Wilson R.K."/>
        </authorList>
    </citation>
    <scope>NUCLEOTIDE SEQUENCE [LARGE SCALE GENOMIC DNA]</scope>
</reference>
<reference key="4">
    <citation type="journal article" date="2004" name="Genome Res.">
        <title>The status, quality, and expansion of the NIH full-length cDNA project: the Mammalian Gene Collection (MGC).</title>
        <authorList>
            <consortium name="The MGC Project Team"/>
        </authorList>
    </citation>
    <scope>NUCLEOTIDE SEQUENCE [LARGE SCALE MRNA]</scope>
</reference>
<reference key="5">
    <citation type="journal article" date="2006" name="Cell">
        <title>Global, in vivo, and site-specific phosphorylation dynamics in signaling networks.</title>
        <authorList>
            <person name="Olsen J.V."/>
            <person name="Blagoev B."/>
            <person name="Gnad F."/>
            <person name="Macek B."/>
            <person name="Kumar C."/>
            <person name="Mortensen P."/>
            <person name="Mann M."/>
        </authorList>
    </citation>
    <scope>IDENTIFICATION BY MASS SPECTROMETRY [LARGE SCALE ANALYSIS]</scope>
    <source>
        <tissue>Cervix carcinoma</tissue>
    </source>
</reference>
<reference key="6">
    <citation type="journal article" date="2013" name="J. Proteome Res.">
        <title>Toward a comprehensive characterization of a human cancer cell phosphoproteome.</title>
        <authorList>
            <person name="Zhou H."/>
            <person name="Di Palma S."/>
            <person name="Preisinger C."/>
            <person name="Peng M."/>
            <person name="Polat A.N."/>
            <person name="Heck A.J."/>
            <person name="Mohammed S."/>
        </authorList>
    </citation>
    <scope>PHOSPHORYLATION [LARGE SCALE ANALYSIS] AT SER-814; SER-1080 AND SER-1338</scope>
    <scope>IDENTIFICATION BY MASS SPECTROMETRY [LARGE SCALE ANALYSIS]</scope>
    <source>
        <tissue>Erythroleukemia</tissue>
    </source>
</reference>
<reference key="7">
    <citation type="journal article" date="2014" name="J. Proteomics">
        <title>An enzyme assisted RP-RPLC approach for in-depth analysis of human liver phosphoproteome.</title>
        <authorList>
            <person name="Bian Y."/>
            <person name="Song C."/>
            <person name="Cheng K."/>
            <person name="Dong M."/>
            <person name="Wang F."/>
            <person name="Huang J."/>
            <person name="Sun D."/>
            <person name="Wang L."/>
            <person name="Ye M."/>
            <person name="Zou H."/>
        </authorList>
    </citation>
    <scope>IDENTIFICATION BY MASS SPECTROMETRY [LARGE SCALE ANALYSIS]</scope>
    <source>
        <tissue>Liver</tissue>
    </source>
</reference>
<organism>
    <name type="scientific">Homo sapiens</name>
    <name type="common">Human</name>
    <dbReference type="NCBI Taxonomy" id="9606"/>
    <lineage>
        <taxon>Eukaryota</taxon>
        <taxon>Metazoa</taxon>
        <taxon>Chordata</taxon>
        <taxon>Craniata</taxon>
        <taxon>Vertebrata</taxon>
        <taxon>Euteleostomi</taxon>
        <taxon>Mammalia</taxon>
        <taxon>Eutheria</taxon>
        <taxon>Euarchontoglires</taxon>
        <taxon>Primates</taxon>
        <taxon>Haplorrhini</taxon>
        <taxon>Catarrhini</taxon>
        <taxon>Hominidae</taxon>
        <taxon>Homo</taxon>
    </lineage>
</organism>
<dbReference type="EMBL" id="D86985">
    <property type="protein sequence ID" value="BAA13221.3"/>
    <property type="status" value="ALT_INIT"/>
    <property type="molecule type" value="mRNA"/>
</dbReference>
<dbReference type="EMBL" id="AC106045">
    <property type="status" value="NOT_ANNOTATED_CDS"/>
    <property type="molecule type" value="Genomic_DNA"/>
</dbReference>
<dbReference type="EMBL" id="BC150286">
    <property type="protein sequence ID" value="AAI50287.1"/>
    <property type="molecule type" value="mRNA"/>
</dbReference>
<dbReference type="CCDS" id="CCDS43209.1"/>
<dbReference type="RefSeq" id="NP_001094060.1">
    <property type="nucleotide sequence ID" value="NM_001100590.2"/>
</dbReference>
<dbReference type="RefSeq" id="NP_055558.2">
    <property type="nucleotide sequence ID" value="NM_014743.3"/>
</dbReference>
<dbReference type="RefSeq" id="XP_047272405.1">
    <property type="nucleotide sequence ID" value="XM_047416449.1"/>
</dbReference>
<dbReference type="RefSeq" id="XP_047272406.1">
    <property type="nucleotide sequence ID" value="XM_047416450.1"/>
</dbReference>
<dbReference type="RefSeq" id="XP_047272407.1">
    <property type="nucleotide sequence ID" value="XM_047416451.1"/>
</dbReference>
<dbReference type="RefSeq" id="XP_047272408.1">
    <property type="nucleotide sequence ID" value="XM_047416452.1"/>
</dbReference>
<dbReference type="RefSeq" id="XP_047272409.1">
    <property type="nucleotide sequence ID" value="XM_047416453.1"/>
</dbReference>
<dbReference type="RefSeq" id="XP_054207290.1">
    <property type="nucleotide sequence ID" value="XM_054351315.1"/>
</dbReference>
<dbReference type="RefSeq" id="XP_054207291.1">
    <property type="nucleotide sequence ID" value="XM_054351316.1"/>
</dbReference>
<dbReference type="RefSeq" id="XP_054207292.1">
    <property type="nucleotide sequence ID" value="XM_054351317.1"/>
</dbReference>
<dbReference type="RefSeq" id="XP_054207293.1">
    <property type="nucleotide sequence ID" value="XM_054351318.1"/>
</dbReference>
<dbReference type="RefSeq" id="XP_054207294.1">
    <property type="nucleotide sequence ID" value="XM_054351319.1"/>
</dbReference>
<dbReference type="BioGRID" id="115122">
    <property type="interactions" value="79"/>
</dbReference>
<dbReference type="FunCoup" id="Q92628">
    <property type="interactions" value="802"/>
</dbReference>
<dbReference type="IntAct" id="Q92628">
    <property type="interactions" value="63"/>
</dbReference>
<dbReference type="MINT" id="Q92628"/>
<dbReference type="STRING" id="9606.ENSP00000303928"/>
<dbReference type="GlyConnect" id="2088">
    <property type="glycosylation" value="3 N-Linked glycans (1 site)"/>
</dbReference>
<dbReference type="GlyCosmos" id="Q92628">
    <property type="glycosylation" value="1 site, 6 glycans"/>
</dbReference>
<dbReference type="GlyGen" id="Q92628">
    <property type="glycosylation" value="5 sites, 8 N-linked glycans (3 sites), 1 O-linked glycan (2 sites)"/>
</dbReference>
<dbReference type="iPTMnet" id="Q92628"/>
<dbReference type="PhosphoSitePlus" id="Q92628"/>
<dbReference type="BioMuta" id="KIAA0232"/>
<dbReference type="DMDM" id="296439501"/>
<dbReference type="jPOST" id="Q92628"/>
<dbReference type="MassIVE" id="Q92628"/>
<dbReference type="PaxDb" id="9606-ENSP00000303928"/>
<dbReference type="PeptideAtlas" id="Q92628"/>
<dbReference type="ProteomicsDB" id="75383"/>
<dbReference type="Antibodypedia" id="51996">
    <property type="antibodies" value="15 antibodies from 6 providers"/>
</dbReference>
<dbReference type="DNASU" id="9778"/>
<dbReference type="Ensembl" id="ENST00000307659.6">
    <property type="protein sequence ID" value="ENSP00000303928.5"/>
    <property type="gene ID" value="ENSG00000170871.12"/>
</dbReference>
<dbReference type="Ensembl" id="ENST00000425103.5">
    <property type="protein sequence ID" value="ENSP00000413739.1"/>
    <property type="gene ID" value="ENSG00000170871.12"/>
</dbReference>
<dbReference type="GeneID" id="9778"/>
<dbReference type="KEGG" id="hsa:9778"/>
<dbReference type="MANE-Select" id="ENST00000307659.6">
    <property type="protein sequence ID" value="ENSP00000303928.5"/>
    <property type="RefSeq nucleotide sequence ID" value="NM_014743.3"/>
    <property type="RefSeq protein sequence ID" value="NP_055558.2"/>
</dbReference>
<dbReference type="UCSC" id="uc003gjq.5">
    <property type="organism name" value="human"/>
</dbReference>
<dbReference type="AGR" id="HGNC:28992"/>
<dbReference type="CTD" id="9778"/>
<dbReference type="DisGeNET" id="9778"/>
<dbReference type="GeneCards" id="KIAA0232"/>
<dbReference type="HGNC" id="HGNC:28992">
    <property type="gene designation" value="KIAA0232"/>
</dbReference>
<dbReference type="HPA" id="ENSG00000170871">
    <property type="expression patterns" value="Low tissue specificity"/>
</dbReference>
<dbReference type="MIM" id="619237">
    <property type="type" value="gene"/>
</dbReference>
<dbReference type="neXtProt" id="NX_Q92628"/>
<dbReference type="OpenTargets" id="ENSG00000170871"/>
<dbReference type="PharmGKB" id="PA162392816"/>
<dbReference type="VEuPathDB" id="HostDB:ENSG00000170871"/>
<dbReference type="eggNOG" id="ENOG502QQF7">
    <property type="taxonomic scope" value="Eukaryota"/>
</dbReference>
<dbReference type="GeneTree" id="ENSGT00390000018549"/>
<dbReference type="HOGENOM" id="CLU_005177_0_0_1"/>
<dbReference type="InParanoid" id="Q92628"/>
<dbReference type="OMA" id="EWALVPP"/>
<dbReference type="OrthoDB" id="9480619at2759"/>
<dbReference type="PAN-GO" id="Q92628">
    <property type="GO annotations" value="0 GO annotations based on evolutionary models"/>
</dbReference>
<dbReference type="PhylomeDB" id="Q92628"/>
<dbReference type="TreeFam" id="TF328400"/>
<dbReference type="PathwayCommons" id="Q92628"/>
<dbReference type="SignaLink" id="Q92628"/>
<dbReference type="BioGRID-ORCS" id="9778">
    <property type="hits" value="14 hits in 1159 CRISPR screens"/>
</dbReference>
<dbReference type="CD-CODE" id="232F8A39">
    <property type="entry name" value="P-body"/>
</dbReference>
<dbReference type="CD-CODE" id="DEE660B4">
    <property type="entry name" value="Stress granule"/>
</dbReference>
<dbReference type="ChiTaRS" id="KIAA0232">
    <property type="organism name" value="human"/>
</dbReference>
<dbReference type="GenomeRNAi" id="9778"/>
<dbReference type="Pharos" id="Q92628">
    <property type="development level" value="Tdark"/>
</dbReference>
<dbReference type="PRO" id="PR:Q92628"/>
<dbReference type="Proteomes" id="UP000005640">
    <property type="component" value="Chromosome 4"/>
</dbReference>
<dbReference type="RNAct" id="Q92628">
    <property type="molecule type" value="protein"/>
</dbReference>
<dbReference type="Bgee" id="ENSG00000170871">
    <property type="expression patterns" value="Expressed in Brodmann (1909) area 23 and 212 other cell types or tissues"/>
</dbReference>
<dbReference type="ExpressionAtlas" id="Q92628">
    <property type="expression patterns" value="baseline and differential"/>
</dbReference>
<dbReference type="GO" id="GO:0005524">
    <property type="term" value="F:ATP binding"/>
    <property type="evidence" value="ECO:0007669"/>
    <property type="project" value="UniProtKB-KW"/>
</dbReference>
<dbReference type="InterPro" id="IPR027871">
    <property type="entry name" value="DUF4603"/>
</dbReference>
<dbReference type="PANTHER" id="PTHR17611">
    <property type="entry name" value="DNA SEGMENT, CHR 5, ERATO DOI 579, EXPRESSED"/>
    <property type="match status" value="1"/>
</dbReference>
<dbReference type="PANTHER" id="PTHR17611:SF3">
    <property type="entry name" value="DNA SEGMENT, CHR 5, ERATO DOI 579, EXPRESSED"/>
    <property type="match status" value="1"/>
</dbReference>
<dbReference type="Pfam" id="PF15376">
    <property type="entry name" value="DUF4603"/>
    <property type="match status" value="1"/>
</dbReference>
<keyword id="KW-0067">ATP-binding</keyword>
<keyword id="KW-0547">Nucleotide-binding</keyword>
<keyword id="KW-0597">Phosphoprotein</keyword>
<keyword id="KW-1267">Proteomics identification</keyword>
<keyword id="KW-1185">Reference proteome</keyword>